<comment type="function">
    <text>Inhibits mammalian alpha-amylases specifically but has no action on plant and microbial alpha-amylases.</text>
</comment>
<name>IAA2_STROI</name>
<keyword id="KW-0022">Alpha-amylase inhibitor</keyword>
<keyword id="KW-0903">Direct protein sequencing</keyword>
<keyword id="KW-1015">Disulfide bond</keyword>
<accession>P20596</accession>
<protein>
    <recommendedName>
        <fullName>Alpha-amylase inhibitor Paim-2</fullName>
    </recommendedName>
    <alternativeName>
        <fullName>Pig pancreatic alpha-amylase inhibitor of microbes II</fullName>
        <shortName>Paim II</shortName>
    </alternativeName>
</protein>
<reference key="1">
    <citation type="journal article" date="1989" name="Biochem. Biophys. Res. Commun.">
        <title>Determination of the primary structure of Paim II, an alpha-amylase inhibitor from Streptomyces coruchorushii, by high-performance tandem mass spectrometry.</title>
        <authorList>
            <person name="Akashi S."/>
            <person name="Hirayama K."/>
            <person name="Murai A."/>
            <person name="Arai M."/>
            <person name="Murao S."/>
        </authorList>
    </citation>
    <scope>PROTEIN SEQUENCE</scope>
</reference>
<dbReference type="PIR" id="A31298">
    <property type="entry name" value="A31298"/>
</dbReference>
<dbReference type="SMR" id="P20596"/>
<dbReference type="GO" id="GO:0015066">
    <property type="term" value="F:alpha-amylase inhibitor activity"/>
    <property type="evidence" value="ECO:0007669"/>
    <property type="project" value="UniProtKB-KW"/>
</dbReference>
<dbReference type="Gene3D" id="2.60.40.20">
    <property type="entry name" value="Alpha-amylase inhibitor"/>
    <property type="match status" value="1"/>
</dbReference>
<dbReference type="InterPro" id="IPR000833">
    <property type="entry name" value="A-amylase_inhib"/>
</dbReference>
<dbReference type="InterPro" id="IPR036379">
    <property type="entry name" value="A-amylase_inhib_sf"/>
</dbReference>
<dbReference type="Pfam" id="PF01356">
    <property type="entry name" value="A_amylase_inhib"/>
    <property type="match status" value="1"/>
</dbReference>
<dbReference type="PIRSF" id="PIRSF001658">
    <property type="entry name" value="Amylase_inhib"/>
    <property type="match status" value="1"/>
</dbReference>
<dbReference type="SMART" id="SM00783">
    <property type="entry name" value="A_amylase_inhib"/>
    <property type="match status" value="1"/>
</dbReference>
<dbReference type="SUPFAM" id="SSF49498">
    <property type="entry name" value="alpha-Amylase inhibitor tendamistat"/>
    <property type="match status" value="1"/>
</dbReference>
<sequence>SDASEPAPACVVMYESWRYTTAANNCADTVSVSVAYQDGATGPCATLPPGAVTTVGEGYLGEHGHPDHLALCPSS</sequence>
<feature type="chain" id="PRO_0000203592" description="Alpha-amylase inhibitor Paim-2">
    <location>
        <begin position="1"/>
        <end position="75"/>
    </location>
</feature>
<feature type="disulfide bond" evidence="1">
    <location>
        <begin position="10"/>
        <end position="26"/>
    </location>
</feature>
<feature type="disulfide bond" evidence="1">
    <location>
        <begin position="44"/>
        <end position="72"/>
    </location>
</feature>
<evidence type="ECO:0000250" key="1"/>
<organism>
    <name type="scientific">Streptomyces olivaceoviridis</name>
    <name type="common">Streptomyces corchorusii</name>
    <dbReference type="NCBI Taxonomy" id="1921"/>
    <lineage>
        <taxon>Bacteria</taxon>
        <taxon>Bacillati</taxon>
        <taxon>Actinomycetota</taxon>
        <taxon>Actinomycetes</taxon>
        <taxon>Kitasatosporales</taxon>
        <taxon>Streptomycetaceae</taxon>
        <taxon>Streptomyces</taxon>
    </lineage>
</organism>
<proteinExistence type="evidence at protein level"/>